<proteinExistence type="inferred from homology"/>
<name>PYRG_BRADU</name>
<dbReference type="EC" id="6.3.4.2" evidence="1"/>
<dbReference type="EMBL" id="BA000040">
    <property type="protein sequence ID" value="BAC50070.1"/>
    <property type="molecule type" value="Genomic_DNA"/>
</dbReference>
<dbReference type="RefSeq" id="NP_771445.1">
    <property type="nucleotide sequence ID" value="NC_004463.1"/>
</dbReference>
<dbReference type="RefSeq" id="WP_011087573.1">
    <property type="nucleotide sequence ID" value="NC_004463.1"/>
</dbReference>
<dbReference type="SMR" id="Q89KU5"/>
<dbReference type="FunCoup" id="Q89KU5">
    <property type="interactions" value="601"/>
</dbReference>
<dbReference type="STRING" id="224911.AAV28_21320"/>
<dbReference type="EnsemblBacteria" id="BAC50070">
    <property type="protein sequence ID" value="BAC50070"/>
    <property type="gene ID" value="BAC50070"/>
</dbReference>
<dbReference type="GeneID" id="46491810"/>
<dbReference type="KEGG" id="bja:bll4805"/>
<dbReference type="PATRIC" id="fig|224911.44.peg.4644"/>
<dbReference type="eggNOG" id="COG0504">
    <property type="taxonomic scope" value="Bacteria"/>
</dbReference>
<dbReference type="HOGENOM" id="CLU_011675_5_0_5"/>
<dbReference type="InParanoid" id="Q89KU5"/>
<dbReference type="OrthoDB" id="9801107at2"/>
<dbReference type="PhylomeDB" id="Q89KU5"/>
<dbReference type="UniPathway" id="UPA00159">
    <property type="reaction ID" value="UER00277"/>
</dbReference>
<dbReference type="Proteomes" id="UP000002526">
    <property type="component" value="Chromosome"/>
</dbReference>
<dbReference type="GO" id="GO:0005829">
    <property type="term" value="C:cytosol"/>
    <property type="evidence" value="ECO:0000318"/>
    <property type="project" value="GO_Central"/>
</dbReference>
<dbReference type="GO" id="GO:0005524">
    <property type="term" value="F:ATP binding"/>
    <property type="evidence" value="ECO:0007669"/>
    <property type="project" value="UniProtKB-KW"/>
</dbReference>
<dbReference type="GO" id="GO:0003883">
    <property type="term" value="F:CTP synthase activity"/>
    <property type="evidence" value="ECO:0000318"/>
    <property type="project" value="GO_Central"/>
</dbReference>
<dbReference type="GO" id="GO:0004359">
    <property type="term" value="F:glutaminase activity"/>
    <property type="evidence" value="ECO:0007669"/>
    <property type="project" value="RHEA"/>
</dbReference>
<dbReference type="GO" id="GO:0042802">
    <property type="term" value="F:identical protein binding"/>
    <property type="evidence" value="ECO:0000318"/>
    <property type="project" value="GO_Central"/>
</dbReference>
<dbReference type="GO" id="GO:0046872">
    <property type="term" value="F:metal ion binding"/>
    <property type="evidence" value="ECO:0007669"/>
    <property type="project" value="UniProtKB-KW"/>
</dbReference>
<dbReference type="GO" id="GO:0044210">
    <property type="term" value="P:'de novo' CTP biosynthetic process"/>
    <property type="evidence" value="ECO:0007669"/>
    <property type="project" value="UniProtKB-UniRule"/>
</dbReference>
<dbReference type="GO" id="GO:0006241">
    <property type="term" value="P:CTP biosynthetic process"/>
    <property type="evidence" value="ECO:0000318"/>
    <property type="project" value="GO_Central"/>
</dbReference>
<dbReference type="GO" id="GO:0019856">
    <property type="term" value="P:pyrimidine nucleobase biosynthetic process"/>
    <property type="evidence" value="ECO:0000318"/>
    <property type="project" value="GO_Central"/>
</dbReference>
<dbReference type="CDD" id="cd03113">
    <property type="entry name" value="CTPS_N"/>
    <property type="match status" value="1"/>
</dbReference>
<dbReference type="CDD" id="cd01746">
    <property type="entry name" value="GATase1_CTP_Synthase"/>
    <property type="match status" value="1"/>
</dbReference>
<dbReference type="FunFam" id="3.40.50.300:FF:000009">
    <property type="entry name" value="CTP synthase"/>
    <property type="match status" value="1"/>
</dbReference>
<dbReference type="FunFam" id="3.40.50.880:FF:000002">
    <property type="entry name" value="CTP synthase"/>
    <property type="match status" value="1"/>
</dbReference>
<dbReference type="Gene3D" id="3.40.50.880">
    <property type="match status" value="1"/>
</dbReference>
<dbReference type="Gene3D" id="3.40.50.300">
    <property type="entry name" value="P-loop containing nucleotide triphosphate hydrolases"/>
    <property type="match status" value="1"/>
</dbReference>
<dbReference type="HAMAP" id="MF_01227">
    <property type="entry name" value="PyrG"/>
    <property type="match status" value="1"/>
</dbReference>
<dbReference type="InterPro" id="IPR029062">
    <property type="entry name" value="Class_I_gatase-like"/>
</dbReference>
<dbReference type="InterPro" id="IPR004468">
    <property type="entry name" value="CTP_synthase"/>
</dbReference>
<dbReference type="InterPro" id="IPR017456">
    <property type="entry name" value="CTP_synthase_N"/>
</dbReference>
<dbReference type="InterPro" id="IPR017926">
    <property type="entry name" value="GATASE"/>
</dbReference>
<dbReference type="InterPro" id="IPR033828">
    <property type="entry name" value="GATase1_CTP_Synthase"/>
</dbReference>
<dbReference type="InterPro" id="IPR027417">
    <property type="entry name" value="P-loop_NTPase"/>
</dbReference>
<dbReference type="NCBIfam" id="NF003792">
    <property type="entry name" value="PRK05380.1"/>
    <property type="match status" value="1"/>
</dbReference>
<dbReference type="NCBIfam" id="TIGR00337">
    <property type="entry name" value="PyrG"/>
    <property type="match status" value="1"/>
</dbReference>
<dbReference type="PANTHER" id="PTHR11550">
    <property type="entry name" value="CTP SYNTHASE"/>
    <property type="match status" value="1"/>
</dbReference>
<dbReference type="PANTHER" id="PTHR11550:SF0">
    <property type="entry name" value="CTP SYNTHASE-RELATED"/>
    <property type="match status" value="1"/>
</dbReference>
<dbReference type="Pfam" id="PF06418">
    <property type="entry name" value="CTP_synth_N"/>
    <property type="match status" value="1"/>
</dbReference>
<dbReference type="Pfam" id="PF00117">
    <property type="entry name" value="GATase"/>
    <property type="match status" value="1"/>
</dbReference>
<dbReference type="SUPFAM" id="SSF52317">
    <property type="entry name" value="Class I glutamine amidotransferase-like"/>
    <property type="match status" value="1"/>
</dbReference>
<dbReference type="SUPFAM" id="SSF52540">
    <property type="entry name" value="P-loop containing nucleoside triphosphate hydrolases"/>
    <property type="match status" value="1"/>
</dbReference>
<dbReference type="PROSITE" id="PS51273">
    <property type="entry name" value="GATASE_TYPE_1"/>
    <property type="match status" value="1"/>
</dbReference>
<sequence length="543" mass="60351">MARYIFITGGVVSSLGKGLASAALGALLQARGYKVRLRKLDPYLNLDPGTMSPYQHGEVFVTDDGAETDLDLGHYERFTGRPATKADNITTGRIYQDIITKERRGDYLGATIQVVPHVTNAIKEFVLDGNDDYDFVLVEIGGTVGDIEGLPFFEAIRQLKNDLPRDHAVYIHLTLLPYIPSAGELKTKPTQHSVKELRSIGIQPDILLCRTDREIPKEERRKLGLFCNVRESAVIEARDVDNIYAVPEAYHNAGLDDEVLAAFGIASRIPPELRSWQQINERVRNPEGNVTIAIVGKYTGMKDAYKSLIEALSHGGIANKVKVNLDWIESEIFEKEDPAPFLEHVNGILVPGGFGQRGAEGKIRAAQFARERDVPYFGICFGMQMAVIEAARNLVGIEDANSTEFGPTKEPLVGLMTEWLRGNELEKRSQAGDLGGTMRLGAYPAALNRGSRVSQVYGGATEISERHRHRYEVNTAYKDRLEQHGLKFSGLSPDGVLPEIVEYEDHPWFIGVQFHPELKSRPFEPHPLFASFIQAAMVQSRLV</sequence>
<feature type="chain" id="PRO_0000266078" description="CTP synthase">
    <location>
        <begin position="1"/>
        <end position="543"/>
    </location>
</feature>
<feature type="domain" description="Glutamine amidotransferase type-1" evidence="1">
    <location>
        <begin position="291"/>
        <end position="542"/>
    </location>
</feature>
<feature type="region of interest" description="Amidoligase domain" evidence="1">
    <location>
        <begin position="1"/>
        <end position="265"/>
    </location>
</feature>
<feature type="active site" description="Nucleophile; for glutamine hydrolysis" evidence="1">
    <location>
        <position position="380"/>
    </location>
</feature>
<feature type="active site" evidence="1">
    <location>
        <position position="515"/>
    </location>
</feature>
<feature type="active site" evidence="1">
    <location>
        <position position="517"/>
    </location>
</feature>
<feature type="binding site" evidence="1">
    <location>
        <position position="13"/>
    </location>
    <ligand>
        <name>CTP</name>
        <dbReference type="ChEBI" id="CHEBI:37563"/>
        <note>allosteric inhibitor</note>
    </ligand>
</feature>
<feature type="binding site" evidence="1">
    <location>
        <position position="13"/>
    </location>
    <ligand>
        <name>UTP</name>
        <dbReference type="ChEBI" id="CHEBI:46398"/>
    </ligand>
</feature>
<feature type="binding site" evidence="1">
    <location>
        <begin position="14"/>
        <end position="19"/>
    </location>
    <ligand>
        <name>ATP</name>
        <dbReference type="ChEBI" id="CHEBI:30616"/>
    </ligand>
</feature>
<feature type="binding site" evidence="1">
    <location>
        <position position="54"/>
    </location>
    <ligand>
        <name>L-glutamine</name>
        <dbReference type="ChEBI" id="CHEBI:58359"/>
    </ligand>
</feature>
<feature type="binding site" evidence="1">
    <location>
        <position position="71"/>
    </location>
    <ligand>
        <name>ATP</name>
        <dbReference type="ChEBI" id="CHEBI:30616"/>
    </ligand>
</feature>
<feature type="binding site" evidence="1">
    <location>
        <position position="71"/>
    </location>
    <ligand>
        <name>Mg(2+)</name>
        <dbReference type="ChEBI" id="CHEBI:18420"/>
    </ligand>
</feature>
<feature type="binding site" evidence="1">
    <location>
        <position position="139"/>
    </location>
    <ligand>
        <name>Mg(2+)</name>
        <dbReference type="ChEBI" id="CHEBI:18420"/>
    </ligand>
</feature>
<feature type="binding site" evidence="1">
    <location>
        <begin position="146"/>
        <end position="148"/>
    </location>
    <ligand>
        <name>CTP</name>
        <dbReference type="ChEBI" id="CHEBI:37563"/>
        <note>allosteric inhibitor</note>
    </ligand>
</feature>
<feature type="binding site" evidence="1">
    <location>
        <begin position="186"/>
        <end position="191"/>
    </location>
    <ligand>
        <name>CTP</name>
        <dbReference type="ChEBI" id="CHEBI:37563"/>
        <note>allosteric inhibitor</note>
    </ligand>
</feature>
<feature type="binding site" evidence="1">
    <location>
        <begin position="186"/>
        <end position="191"/>
    </location>
    <ligand>
        <name>UTP</name>
        <dbReference type="ChEBI" id="CHEBI:46398"/>
    </ligand>
</feature>
<feature type="binding site" evidence="1">
    <location>
        <position position="222"/>
    </location>
    <ligand>
        <name>CTP</name>
        <dbReference type="ChEBI" id="CHEBI:37563"/>
        <note>allosteric inhibitor</note>
    </ligand>
</feature>
<feature type="binding site" evidence="1">
    <location>
        <position position="222"/>
    </location>
    <ligand>
        <name>UTP</name>
        <dbReference type="ChEBI" id="CHEBI:46398"/>
    </ligand>
</feature>
<feature type="binding site" evidence="1">
    <location>
        <begin position="238"/>
        <end position="240"/>
    </location>
    <ligand>
        <name>ATP</name>
        <dbReference type="ChEBI" id="CHEBI:30616"/>
    </ligand>
</feature>
<feature type="binding site" evidence="1">
    <location>
        <position position="353"/>
    </location>
    <ligand>
        <name>L-glutamine</name>
        <dbReference type="ChEBI" id="CHEBI:58359"/>
    </ligand>
</feature>
<feature type="binding site" evidence="1">
    <location>
        <begin position="381"/>
        <end position="384"/>
    </location>
    <ligand>
        <name>L-glutamine</name>
        <dbReference type="ChEBI" id="CHEBI:58359"/>
    </ligand>
</feature>
<feature type="binding site" evidence="1">
    <location>
        <position position="404"/>
    </location>
    <ligand>
        <name>L-glutamine</name>
        <dbReference type="ChEBI" id="CHEBI:58359"/>
    </ligand>
</feature>
<feature type="binding site" evidence="1">
    <location>
        <position position="470"/>
    </location>
    <ligand>
        <name>L-glutamine</name>
        <dbReference type="ChEBI" id="CHEBI:58359"/>
    </ligand>
</feature>
<protein>
    <recommendedName>
        <fullName evidence="1">CTP synthase</fullName>
        <ecNumber evidence="1">6.3.4.2</ecNumber>
    </recommendedName>
    <alternativeName>
        <fullName evidence="1">Cytidine 5'-triphosphate synthase</fullName>
    </alternativeName>
    <alternativeName>
        <fullName evidence="1">Cytidine triphosphate synthetase</fullName>
        <shortName evidence="1">CTP synthetase</shortName>
        <shortName evidence="1">CTPS</shortName>
    </alternativeName>
    <alternativeName>
        <fullName evidence="1">UTP--ammonia ligase</fullName>
    </alternativeName>
</protein>
<reference key="1">
    <citation type="journal article" date="2002" name="DNA Res.">
        <title>Complete genomic sequence of nitrogen-fixing symbiotic bacterium Bradyrhizobium japonicum USDA110.</title>
        <authorList>
            <person name="Kaneko T."/>
            <person name="Nakamura Y."/>
            <person name="Sato S."/>
            <person name="Minamisawa K."/>
            <person name="Uchiumi T."/>
            <person name="Sasamoto S."/>
            <person name="Watanabe A."/>
            <person name="Idesawa K."/>
            <person name="Iriguchi M."/>
            <person name="Kawashima K."/>
            <person name="Kohara M."/>
            <person name="Matsumoto M."/>
            <person name="Shimpo S."/>
            <person name="Tsuruoka H."/>
            <person name="Wada T."/>
            <person name="Yamada M."/>
            <person name="Tabata S."/>
        </authorList>
    </citation>
    <scope>NUCLEOTIDE SEQUENCE [LARGE SCALE GENOMIC DNA]</scope>
    <source>
        <strain>JCM 10833 / BCRC 13528 / IAM 13628 / NBRC 14792 / USDA 110</strain>
    </source>
</reference>
<gene>
    <name evidence="1" type="primary">pyrG</name>
    <name type="ordered locus">bll4805</name>
</gene>
<organism>
    <name type="scientific">Bradyrhizobium diazoefficiens (strain JCM 10833 / BCRC 13528 / IAM 13628 / NBRC 14792 / USDA 110)</name>
    <dbReference type="NCBI Taxonomy" id="224911"/>
    <lineage>
        <taxon>Bacteria</taxon>
        <taxon>Pseudomonadati</taxon>
        <taxon>Pseudomonadota</taxon>
        <taxon>Alphaproteobacteria</taxon>
        <taxon>Hyphomicrobiales</taxon>
        <taxon>Nitrobacteraceae</taxon>
        <taxon>Bradyrhizobium</taxon>
    </lineage>
</organism>
<accession>Q89KU5</accession>
<keyword id="KW-0067">ATP-binding</keyword>
<keyword id="KW-0315">Glutamine amidotransferase</keyword>
<keyword id="KW-0436">Ligase</keyword>
<keyword id="KW-0460">Magnesium</keyword>
<keyword id="KW-0479">Metal-binding</keyword>
<keyword id="KW-0547">Nucleotide-binding</keyword>
<keyword id="KW-0665">Pyrimidine biosynthesis</keyword>
<keyword id="KW-1185">Reference proteome</keyword>
<comment type="function">
    <text evidence="1">Catalyzes the ATP-dependent amination of UTP to CTP with either L-glutamine or ammonia as the source of nitrogen. Regulates intracellular CTP levels through interactions with the four ribonucleotide triphosphates.</text>
</comment>
<comment type="catalytic activity">
    <reaction evidence="1">
        <text>UTP + L-glutamine + ATP + H2O = CTP + L-glutamate + ADP + phosphate + 2 H(+)</text>
        <dbReference type="Rhea" id="RHEA:26426"/>
        <dbReference type="ChEBI" id="CHEBI:15377"/>
        <dbReference type="ChEBI" id="CHEBI:15378"/>
        <dbReference type="ChEBI" id="CHEBI:29985"/>
        <dbReference type="ChEBI" id="CHEBI:30616"/>
        <dbReference type="ChEBI" id="CHEBI:37563"/>
        <dbReference type="ChEBI" id="CHEBI:43474"/>
        <dbReference type="ChEBI" id="CHEBI:46398"/>
        <dbReference type="ChEBI" id="CHEBI:58359"/>
        <dbReference type="ChEBI" id="CHEBI:456216"/>
        <dbReference type="EC" id="6.3.4.2"/>
    </reaction>
</comment>
<comment type="catalytic activity">
    <reaction evidence="1">
        <text>L-glutamine + H2O = L-glutamate + NH4(+)</text>
        <dbReference type="Rhea" id="RHEA:15889"/>
        <dbReference type="ChEBI" id="CHEBI:15377"/>
        <dbReference type="ChEBI" id="CHEBI:28938"/>
        <dbReference type="ChEBI" id="CHEBI:29985"/>
        <dbReference type="ChEBI" id="CHEBI:58359"/>
    </reaction>
</comment>
<comment type="catalytic activity">
    <reaction evidence="1">
        <text>UTP + NH4(+) + ATP = CTP + ADP + phosphate + 2 H(+)</text>
        <dbReference type="Rhea" id="RHEA:16597"/>
        <dbReference type="ChEBI" id="CHEBI:15378"/>
        <dbReference type="ChEBI" id="CHEBI:28938"/>
        <dbReference type="ChEBI" id="CHEBI:30616"/>
        <dbReference type="ChEBI" id="CHEBI:37563"/>
        <dbReference type="ChEBI" id="CHEBI:43474"/>
        <dbReference type="ChEBI" id="CHEBI:46398"/>
        <dbReference type="ChEBI" id="CHEBI:456216"/>
    </reaction>
</comment>
<comment type="activity regulation">
    <text evidence="1">Allosterically activated by GTP, when glutamine is the substrate; GTP has no effect on the reaction when ammonia is the substrate. The allosteric effector GTP functions by stabilizing the protein conformation that binds the tetrahedral intermediate(s) formed during glutamine hydrolysis. Inhibited by the product CTP, via allosteric rather than competitive inhibition.</text>
</comment>
<comment type="pathway">
    <text evidence="1">Pyrimidine metabolism; CTP biosynthesis via de novo pathway; CTP from UDP: step 2/2.</text>
</comment>
<comment type="subunit">
    <text evidence="1">Homotetramer.</text>
</comment>
<comment type="miscellaneous">
    <text evidence="1">CTPSs have evolved a hybrid strategy for distinguishing between UTP and CTP. The overlapping regions of the product feedback inhibitory and substrate sites recognize a common feature in both compounds, the triphosphate moiety. To differentiate isosteric substrate and product pyrimidine rings, an additional pocket far from the expected kinase/ligase catalytic site, specifically recognizes the cytosine and ribose portions of the product inhibitor.</text>
</comment>
<comment type="similarity">
    <text evidence="1">Belongs to the CTP synthase family.</text>
</comment>
<evidence type="ECO:0000255" key="1">
    <source>
        <dbReference type="HAMAP-Rule" id="MF_01227"/>
    </source>
</evidence>